<proteinExistence type="inferred from homology"/>
<name>UNG_XANC8</name>
<organism>
    <name type="scientific">Xanthomonas campestris pv. campestris (strain 8004)</name>
    <dbReference type="NCBI Taxonomy" id="314565"/>
    <lineage>
        <taxon>Bacteria</taxon>
        <taxon>Pseudomonadati</taxon>
        <taxon>Pseudomonadota</taxon>
        <taxon>Gammaproteobacteria</taxon>
        <taxon>Lysobacterales</taxon>
        <taxon>Lysobacteraceae</taxon>
        <taxon>Xanthomonas</taxon>
    </lineage>
</organism>
<feature type="chain" id="PRO_1000009963" description="Uracil-DNA glycosylase">
    <location>
        <begin position="1"/>
        <end position="241"/>
    </location>
</feature>
<feature type="active site" description="Proton acceptor" evidence="1">
    <location>
        <position position="71"/>
    </location>
</feature>
<keyword id="KW-0963">Cytoplasm</keyword>
<keyword id="KW-0227">DNA damage</keyword>
<keyword id="KW-0234">DNA repair</keyword>
<keyword id="KW-0378">Hydrolase</keyword>
<dbReference type="EC" id="3.2.2.27" evidence="1"/>
<dbReference type="EMBL" id="CP000050">
    <property type="protein sequence ID" value="AAY50884.1"/>
    <property type="molecule type" value="Genomic_DNA"/>
</dbReference>
<dbReference type="RefSeq" id="WP_011038854.1">
    <property type="nucleotide sequence ID" value="NZ_CP155948.1"/>
</dbReference>
<dbReference type="SMR" id="Q4UPY9"/>
<dbReference type="KEGG" id="xcb:XC_3844"/>
<dbReference type="HOGENOM" id="CLU_032162_3_1_6"/>
<dbReference type="Proteomes" id="UP000000420">
    <property type="component" value="Chromosome"/>
</dbReference>
<dbReference type="GO" id="GO:0005737">
    <property type="term" value="C:cytoplasm"/>
    <property type="evidence" value="ECO:0007669"/>
    <property type="project" value="UniProtKB-SubCell"/>
</dbReference>
<dbReference type="GO" id="GO:0004844">
    <property type="term" value="F:uracil DNA N-glycosylase activity"/>
    <property type="evidence" value="ECO:0007669"/>
    <property type="project" value="UniProtKB-UniRule"/>
</dbReference>
<dbReference type="GO" id="GO:0097510">
    <property type="term" value="P:base-excision repair, AP site formation via deaminated base removal"/>
    <property type="evidence" value="ECO:0007669"/>
    <property type="project" value="TreeGrafter"/>
</dbReference>
<dbReference type="CDD" id="cd10027">
    <property type="entry name" value="UDG-F1-like"/>
    <property type="match status" value="1"/>
</dbReference>
<dbReference type="FunFam" id="3.40.470.10:FF:000001">
    <property type="entry name" value="Uracil-DNA glycosylase"/>
    <property type="match status" value="1"/>
</dbReference>
<dbReference type="Gene3D" id="3.40.470.10">
    <property type="entry name" value="Uracil-DNA glycosylase-like domain"/>
    <property type="match status" value="1"/>
</dbReference>
<dbReference type="HAMAP" id="MF_00148">
    <property type="entry name" value="UDG"/>
    <property type="match status" value="1"/>
</dbReference>
<dbReference type="InterPro" id="IPR002043">
    <property type="entry name" value="UDG_fam1"/>
</dbReference>
<dbReference type="InterPro" id="IPR018085">
    <property type="entry name" value="Ura-DNA_Glyclase_AS"/>
</dbReference>
<dbReference type="InterPro" id="IPR005122">
    <property type="entry name" value="Uracil-DNA_glycosylase-like"/>
</dbReference>
<dbReference type="InterPro" id="IPR036895">
    <property type="entry name" value="Uracil-DNA_glycosylase-like_sf"/>
</dbReference>
<dbReference type="NCBIfam" id="NF003588">
    <property type="entry name" value="PRK05254.1-1"/>
    <property type="match status" value="1"/>
</dbReference>
<dbReference type="NCBIfam" id="NF003589">
    <property type="entry name" value="PRK05254.1-2"/>
    <property type="match status" value="1"/>
</dbReference>
<dbReference type="NCBIfam" id="NF003591">
    <property type="entry name" value="PRK05254.1-4"/>
    <property type="match status" value="1"/>
</dbReference>
<dbReference type="NCBIfam" id="NF003592">
    <property type="entry name" value="PRK05254.1-5"/>
    <property type="match status" value="1"/>
</dbReference>
<dbReference type="NCBIfam" id="TIGR00628">
    <property type="entry name" value="ung"/>
    <property type="match status" value="1"/>
</dbReference>
<dbReference type="PANTHER" id="PTHR11264">
    <property type="entry name" value="URACIL-DNA GLYCOSYLASE"/>
    <property type="match status" value="1"/>
</dbReference>
<dbReference type="PANTHER" id="PTHR11264:SF0">
    <property type="entry name" value="URACIL-DNA GLYCOSYLASE"/>
    <property type="match status" value="1"/>
</dbReference>
<dbReference type="Pfam" id="PF03167">
    <property type="entry name" value="UDG"/>
    <property type="match status" value="1"/>
</dbReference>
<dbReference type="SMART" id="SM00986">
    <property type="entry name" value="UDG"/>
    <property type="match status" value="1"/>
</dbReference>
<dbReference type="SMART" id="SM00987">
    <property type="entry name" value="UreE_C"/>
    <property type="match status" value="1"/>
</dbReference>
<dbReference type="SUPFAM" id="SSF52141">
    <property type="entry name" value="Uracil-DNA glycosylase-like"/>
    <property type="match status" value="1"/>
</dbReference>
<dbReference type="PROSITE" id="PS00130">
    <property type="entry name" value="U_DNA_GLYCOSYLASE"/>
    <property type="match status" value="1"/>
</dbReference>
<gene>
    <name evidence="1" type="primary">ung</name>
    <name type="ordered locus">XC_3844</name>
</gene>
<reference key="1">
    <citation type="journal article" date="2005" name="Genome Res.">
        <title>Comparative and functional genomic analyses of the pathogenicity of phytopathogen Xanthomonas campestris pv. campestris.</title>
        <authorList>
            <person name="Qian W."/>
            <person name="Jia Y."/>
            <person name="Ren S.-X."/>
            <person name="He Y.-Q."/>
            <person name="Feng J.-X."/>
            <person name="Lu L.-F."/>
            <person name="Sun Q."/>
            <person name="Ying G."/>
            <person name="Tang D.-J."/>
            <person name="Tang H."/>
            <person name="Wu W."/>
            <person name="Hao P."/>
            <person name="Wang L."/>
            <person name="Jiang B.-L."/>
            <person name="Zeng S."/>
            <person name="Gu W.-Y."/>
            <person name="Lu G."/>
            <person name="Rong L."/>
            <person name="Tian Y."/>
            <person name="Yao Z."/>
            <person name="Fu G."/>
            <person name="Chen B."/>
            <person name="Fang R."/>
            <person name="Qiang B."/>
            <person name="Chen Z."/>
            <person name="Zhao G.-P."/>
            <person name="Tang J.-L."/>
            <person name="He C."/>
        </authorList>
    </citation>
    <scope>NUCLEOTIDE SEQUENCE [LARGE SCALE GENOMIC DNA]</scope>
    <source>
        <strain>8004</strain>
    </source>
</reference>
<accession>Q4UPY9</accession>
<sequence>MTEGEGRIQLEPSWKARVGEWLLQPQMQELSAFLRQRKAANARVFPPGPQIFAAFDATPFEQVKVVVLGQDPYHGEGQAHGLCFSVLPGVPVPPSLLNIYKEIQDDLGIPRPDHGYLMPWARQGVLLLNAVLTVEQGRAGAHQNKGWEGFTDHVVETLNREREGLVFLLWGSYAQSKGKVIDQARHRVFKAPHPSPLSAHRGFLGCKHFSKTNEHLQRRGLSPIDWSLPSRAALDLSLAGG</sequence>
<evidence type="ECO:0000255" key="1">
    <source>
        <dbReference type="HAMAP-Rule" id="MF_00148"/>
    </source>
</evidence>
<comment type="function">
    <text evidence="1">Excises uracil residues from the DNA which can arise as a result of misincorporation of dUMP residues by DNA polymerase or due to deamination of cytosine.</text>
</comment>
<comment type="catalytic activity">
    <reaction evidence="1">
        <text>Hydrolyzes single-stranded DNA or mismatched double-stranded DNA and polynucleotides, releasing free uracil.</text>
        <dbReference type="EC" id="3.2.2.27"/>
    </reaction>
</comment>
<comment type="subcellular location">
    <subcellularLocation>
        <location evidence="1">Cytoplasm</location>
    </subcellularLocation>
</comment>
<comment type="similarity">
    <text evidence="1">Belongs to the uracil-DNA glycosylase (UDG) superfamily. UNG family.</text>
</comment>
<protein>
    <recommendedName>
        <fullName evidence="1">Uracil-DNA glycosylase</fullName>
        <shortName evidence="1">UDG</shortName>
        <ecNumber evidence="1">3.2.2.27</ecNumber>
    </recommendedName>
</protein>